<protein>
    <recommendedName>
        <fullName>ATP synthase subunit 9, mitochondrial</fullName>
    </recommendedName>
    <alternativeName>
        <fullName>Lipid-binding protein</fullName>
    </alternativeName>
</protein>
<keyword id="KW-0067">ATP-binding</keyword>
<keyword id="KW-0138">CF(0)</keyword>
<keyword id="KW-0375">Hydrogen ion transport</keyword>
<keyword id="KW-0406">Ion transport</keyword>
<keyword id="KW-0446">Lipid-binding</keyword>
<keyword id="KW-0472">Membrane</keyword>
<keyword id="KW-0496">Mitochondrion</keyword>
<keyword id="KW-0547">Nucleotide-binding</keyword>
<keyword id="KW-0691">RNA editing</keyword>
<keyword id="KW-0812">Transmembrane</keyword>
<keyword id="KW-1133">Transmembrane helix</keyword>
<keyword id="KW-0813">Transport</keyword>
<name>ATP9_PETHY</name>
<proteinExistence type="evidence at transcript level"/>
<feature type="chain" id="PRO_0000112220" description="ATP synthase subunit 9, mitochondrial">
    <location>
        <begin position="1"/>
        <end position="74"/>
    </location>
</feature>
<feature type="transmembrane region" description="Helical" evidence="2">
    <location>
        <begin position="8"/>
        <end position="28"/>
    </location>
</feature>
<feature type="transmembrane region" description="Helical" evidence="2">
    <location>
        <begin position="50"/>
        <end position="70"/>
    </location>
</feature>
<feature type="site" description="Reversibly protonated during proton transport" evidence="1">
    <location>
        <position position="57"/>
    </location>
</feature>
<comment type="function">
    <text>This protein is one of the chains of the nonenzymatic membrane component (F0) of mitochondrial ATPase.</text>
</comment>
<comment type="subunit">
    <text>F-type ATPases have 2 components, CF(1) - the catalytic core - and CF(0) - the membrane proton channel. CF(1) has five subunits: alpha(3), beta(3), gamma(1), delta(1), epsilon(1). CF(0) has three main subunits: a, b and c.</text>
</comment>
<comment type="subcellular location">
    <subcellularLocation>
        <location evidence="4">Mitochondrion membrane</location>
        <topology evidence="4">Multi-pass membrane protein</topology>
    </subcellularLocation>
</comment>
<comment type="RNA editing">
    <location>
        <position position="7" evidence="3"/>
    </location>
    <location>
        <position position="15" evidence="3"/>
    </location>
    <location>
        <position position="17" evidence="3"/>
    </location>
    <location>
        <position position="28" evidence="3"/>
    </location>
    <location>
        <position position="31" evidence="3"/>
    </location>
    <location>
        <position position="59" evidence="3"/>
    </location>
    <location>
        <position position="61" evidence="3"/>
    </location>
    <location>
        <position position="64" evidence="3"/>
    </location>
    <location>
        <position position="75" evidence="3"/>
    </location>
    <text>The stop codon at position 75 is created by RNA editing.</text>
</comment>
<comment type="similarity">
    <text evidence="4">Belongs to the ATPase C chain family.</text>
</comment>
<organism>
    <name type="scientific">Petunia hybrida</name>
    <name type="common">Petunia</name>
    <dbReference type="NCBI Taxonomy" id="4102"/>
    <lineage>
        <taxon>Eukaryota</taxon>
        <taxon>Viridiplantae</taxon>
        <taxon>Streptophyta</taxon>
        <taxon>Embryophyta</taxon>
        <taxon>Tracheophyta</taxon>
        <taxon>Spermatophyta</taxon>
        <taxon>Magnoliopsida</taxon>
        <taxon>eudicotyledons</taxon>
        <taxon>Gunneridae</taxon>
        <taxon>Pentapetalae</taxon>
        <taxon>asterids</taxon>
        <taxon>lamiids</taxon>
        <taxon>Solanales</taxon>
        <taxon>Solanaceae</taxon>
        <taxon>Petunioideae</taxon>
        <taxon>Petunia</taxon>
    </lineage>
</organism>
<gene>
    <name type="primary">ATP9</name>
</gene>
<evidence type="ECO:0000250" key="1"/>
<evidence type="ECO:0000255" key="2"/>
<evidence type="ECO:0000269" key="3">
    <source>
    </source>
</evidence>
<evidence type="ECO:0000305" key="4"/>
<dbReference type="EMBL" id="X04504">
    <property type="protein sequence ID" value="CAA28189.1"/>
    <property type="status" value="ALT_SEQ"/>
    <property type="molecule type" value="Genomic_DNA"/>
</dbReference>
<dbReference type="EMBL" id="X05808">
    <property type="protein sequence ID" value="CAA29251.1"/>
    <property type="status" value="ALT_SEQ"/>
    <property type="molecule type" value="Genomic_DNA"/>
</dbReference>
<dbReference type="EMBL" id="X05807">
    <property type="protein sequence ID" value="CAA29250.1"/>
    <property type="status" value="ALT_SEQ"/>
    <property type="molecule type" value="Genomic_DNA"/>
</dbReference>
<dbReference type="PIR" id="S00271">
    <property type="entry name" value="LWPJA"/>
</dbReference>
<dbReference type="SMR" id="P60118"/>
<dbReference type="GO" id="GO:0031966">
    <property type="term" value="C:mitochondrial membrane"/>
    <property type="evidence" value="ECO:0007669"/>
    <property type="project" value="UniProtKB-SubCell"/>
</dbReference>
<dbReference type="GO" id="GO:0045259">
    <property type="term" value="C:proton-transporting ATP synthase complex"/>
    <property type="evidence" value="ECO:0007669"/>
    <property type="project" value="UniProtKB-KW"/>
</dbReference>
<dbReference type="GO" id="GO:0033177">
    <property type="term" value="C:proton-transporting two-sector ATPase complex, proton-transporting domain"/>
    <property type="evidence" value="ECO:0007669"/>
    <property type="project" value="InterPro"/>
</dbReference>
<dbReference type="GO" id="GO:0005524">
    <property type="term" value="F:ATP binding"/>
    <property type="evidence" value="ECO:0007669"/>
    <property type="project" value="UniProtKB-KW"/>
</dbReference>
<dbReference type="GO" id="GO:0008289">
    <property type="term" value="F:lipid binding"/>
    <property type="evidence" value="ECO:0007669"/>
    <property type="project" value="UniProtKB-KW"/>
</dbReference>
<dbReference type="GO" id="GO:0015078">
    <property type="term" value="F:proton transmembrane transporter activity"/>
    <property type="evidence" value="ECO:0007669"/>
    <property type="project" value="InterPro"/>
</dbReference>
<dbReference type="GO" id="GO:0015986">
    <property type="term" value="P:proton motive force-driven ATP synthesis"/>
    <property type="evidence" value="ECO:0007669"/>
    <property type="project" value="InterPro"/>
</dbReference>
<dbReference type="CDD" id="cd18182">
    <property type="entry name" value="ATP-synt_Fo_c_ATP5G3"/>
    <property type="match status" value="1"/>
</dbReference>
<dbReference type="FunFam" id="1.20.20.10:FF:000005">
    <property type="entry name" value="ATP synthase subunit 9, mitochondrial"/>
    <property type="match status" value="1"/>
</dbReference>
<dbReference type="Gene3D" id="1.20.20.10">
    <property type="entry name" value="F1F0 ATP synthase subunit C"/>
    <property type="match status" value="1"/>
</dbReference>
<dbReference type="HAMAP" id="MF_01396">
    <property type="entry name" value="ATP_synth_c_bact"/>
    <property type="match status" value="1"/>
</dbReference>
<dbReference type="InterPro" id="IPR000454">
    <property type="entry name" value="ATP_synth_F0_csu"/>
</dbReference>
<dbReference type="InterPro" id="IPR020537">
    <property type="entry name" value="ATP_synth_F0_csu_DDCD_BS"/>
</dbReference>
<dbReference type="InterPro" id="IPR038662">
    <property type="entry name" value="ATP_synth_F0_csu_sf"/>
</dbReference>
<dbReference type="InterPro" id="IPR002379">
    <property type="entry name" value="ATPase_proteolipid_c-like_dom"/>
</dbReference>
<dbReference type="InterPro" id="IPR035921">
    <property type="entry name" value="F/V-ATP_Csub_sf"/>
</dbReference>
<dbReference type="PANTHER" id="PTHR10031">
    <property type="entry name" value="ATP SYNTHASE LIPID-BINDING PROTEIN, MITOCHONDRIAL"/>
    <property type="match status" value="1"/>
</dbReference>
<dbReference type="PANTHER" id="PTHR10031:SF0">
    <property type="entry name" value="ATPASE PROTEIN 9"/>
    <property type="match status" value="1"/>
</dbReference>
<dbReference type="Pfam" id="PF00137">
    <property type="entry name" value="ATP-synt_C"/>
    <property type="match status" value="1"/>
</dbReference>
<dbReference type="PRINTS" id="PR00124">
    <property type="entry name" value="ATPASEC"/>
</dbReference>
<dbReference type="SUPFAM" id="SSF81333">
    <property type="entry name" value="F1F0 ATP synthase subunit C"/>
    <property type="match status" value="1"/>
</dbReference>
<dbReference type="PROSITE" id="PS00605">
    <property type="entry name" value="ATPASE_C"/>
    <property type="match status" value="1"/>
</dbReference>
<accession>P60118</accession>
<accession>P05497</accession>
<accession>P05498</accession>
<reference key="1">
    <citation type="journal article" date="1986" name="Nucleic Acids Res.">
        <title>Sequence and transcription analysis of the Petunia mitochondrial gene for the ATP synthase proteolipid subunit.</title>
        <authorList>
            <person name="Young E.G."/>
            <person name="Hanson M.R."/>
            <person name="Dierks P.M."/>
        </authorList>
    </citation>
    <scope>NUCLEOTIDE SEQUENCE [GENOMIC DNA]</scope>
    <source>
        <strain>Line 3704</strain>
    </source>
</reference>
<reference key="2">
    <citation type="journal article" date="1987" name="Mol. Gen. Genet.">
        <title>Different transcript abundance of two divergent ATP synthase subunit 9 genes in the mitochondrial genome of Petunia hybrida.</title>
        <authorList>
            <person name="Rothenberg M."/>
            <person name="Hanson M.R."/>
        </authorList>
    </citation>
    <scope>NUCLEOTIDE SEQUENCE [GENOMIC DNA]</scope>
    <source>
        <strain>Line 3704</strain>
    </source>
</reference>
<reference key="3">
    <citation type="journal article" date="1991" name="Curr. Genet.">
        <title>A termination codon is created by RNA editing in the petunia atp9 transcript.</title>
        <authorList>
            <person name="Wintz H."/>
            <person name="Hanson M.R."/>
        </authorList>
    </citation>
    <scope>RNA EDITING OF TERMINATOR CODON</scope>
    <source>
        <strain>Line 3704</strain>
    </source>
</reference>
<sequence length="74" mass="7563">MLEGAKLMGAGAATIALAGAAIGIGNVFSSLIHSVARNPSLAKQLFGYAILGFALTEAIALFALMMAFLISFVF</sequence>
<geneLocation type="mitochondrion"/>